<sequence>MTENIHKHRILILDFGSQYTQLVARRVRELGVYCELWAWDVTEAQIREFNPSGIILSGGPESTTEENSPRAPQYVFEAGVPVFGVCYGMQTMAMQLGGHVEGSNEREFGYAQVEVVNDSALVRGIEDSLTADGKPLLDVWMSHGDKVTAIPADFVTVASTDNCPFAIMANEEKRFYGVQFHPEVTHTRQGMRMLERFVRDICQCEALWTPAKIIDDAVERIRQQVGDDKVILGLSGGVDSSVTAMLLHRAIGKNLTCVFVDNGLLRLNEAQQVMEMFGDHFGLNIVHVEGEQRFLDALAGESDPEAKRKIIGRVFVEVFDEEALKLDDVKWLAQGTIYPDVIESAASATGKAHVIKSHHNVGGLPKEMKMGLVEPLRELFKDEVRKIGLELGLPYDMLYRHPFPGPGLGVRVLGEVKKEYCDLLRRADAIFIEELHKADLYNKVSQAFTVFLPVRSVGVMGDGRKYDWVVSLRAVETIDFMTAHWAHLPYDFLGRVSNRIINEVNGISRVVYDISGKPPATIEWE</sequence>
<proteinExistence type="inferred from homology"/>
<feature type="chain" id="PRO_1000120323" description="GMP synthase [glutamine-hydrolyzing]">
    <location>
        <begin position="1"/>
        <end position="525"/>
    </location>
</feature>
<feature type="domain" description="Glutamine amidotransferase type-1" evidence="1">
    <location>
        <begin position="9"/>
        <end position="207"/>
    </location>
</feature>
<feature type="domain" description="GMPS ATP-PPase" evidence="1">
    <location>
        <begin position="208"/>
        <end position="400"/>
    </location>
</feature>
<feature type="active site" description="Nucleophile" evidence="1">
    <location>
        <position position="86"/>
    </location>
</feature>
<feature type="active site" evidence="1">
    <location>
        <position position="181"/>
    </location>
</feature>
<feature type="active site" evidence="1">
    <location>
        <position position="183"/>
    </location>
</feature>
<feature type="binding site" evidence="1">
    <location>
        <begin position="235"/>
        <end position="241"/>
    </location>
    <ligand>
        <name>ATP</name>
        <dbReference type="ChEBI" id="CHEBI:30616"/>
    </ligand>
</feature>
<accession>A6TCC2</accession>
<protein>
    <recommendedName>
        <fullName evidence="1">GMP synthase [glutamine-hydrolyzing]</fullName>
        <ecNumber evidence="1">6.3.5.2</ecNumber>
    </recommendedName>
    <alternativeName>
        <fullName evidence="1">GMP synthetase</fullName>
    </alternativeName>
    <alternativeName>
        <fullName evidence="1">Glutamine amidotransferase</fullName>
    </alternativeName>
</protein>
<name>GUAA_KLEP7</name>
<evidence type="ECO:0000255" key="1">
    <source>
        <dbReference type="HAMAP-Rule" id="MF_00344"/>
    </source>
</evidence>
<keyword id="KW-0067">ATP-binding</keyword>
<keyword id="KW-0315">Glutamine amidotransferase</keyword>
<keyword id="KW-0332">GMP biosynthesis</keyword>
<keyword id="KW-0436">Ligase</keyword>
<keyword id="KW-0547">Nucleotide-binding</keyword>
<keyword id="KW-0658">Purine biosynthesis</keyword>
<comment type="function">
    <text evidence="1">Catalyzes the synthesis of GMP from XMP.</text>
</comment>
<comment type="catalytic activity">
    <reaction evidence="1">
        <text>XMP + L-glutamine + ATP + H2O = GMP + L-glutamate + AMP + diphosphate + 2 H(+)</text>
        <dbReference type="Rhea" id="RHEA:11680"/>
        <dbReference type="ChEBI" id="CHEBI:15377"/>
        <dbReference type="ChEBI" id="CHEBI:15378"/>
        <dbReference type="ChEBI" id="CHEBI:29985"/>
        <dbReference type="ChEBI" id="CHEBI:30616"/>
        <dbReference type="ChEBI" id="CHEBI:33019"/>
        <dbReference type="ChEBI" id="CHEBI:57464"/>
        <dbReference type="ChEBI" id="CHEBI:58115"/>
        <dbReference type="ChEBI" id="CHEBI:58359"/>
        <dbReference type="ChEBI" id="CHEBI:456215"/>
        <dbReference type="EC" id="6.3.5.2"/>
    </reaction>
</comment>
<comment type="pathway">
    <text evidence="1">Purine metabolism; GMP biosynthesis; GMP from XMP (L-Gln route): step 1/1.</text>
</comment>
<comment type="subunit">
    <text evidence="1">Homodimer.</text>
</comment>
<dbReference type="EC" id="6.3.5.2" evidence="1"/>
<dbReference type="EMBL" id="CP000647">
    <property type="protein sequence ID" value="ABR78243.1"/>
    <property type="molecule type" value="Genomic_DNA"/>
</dbReference>
<dbReference type="RefSeq" id="WP_004151979.1">
    <property type="nucleotide sequence ID" value="NC_009648.1"/>
</dbReference>
<dbReference type="SMR" id="A6TCC2"/>
<dbReference type="STRING" id="272620.KPN_02833"/>
<dbReference type="MEROPS" id="C26.957"/>
<dbReference type="jPOST" id="A6TCC2"/>
<dbReference type="PaxDb" id="272620-KPN_02833"/>
<dbReference type="EnsemblBacteria" id="ABR78243">
    <property type="protein sequence ID" value="ABR78243"/>
    <property type="gene ID" value="KPN_02833"/>
</dbReference>
<dbReference type="KEGG" id="kpn:KPN_02833"/>
<dbReference type="HOGENOM" id="CLU_014340_0_5_6"/>
<dbReference type="UniPathway" id="UPA00189">
    <property type="reaction ID" value="UER00296"/>
</dbReference>
<dbReference type="Proteomes" id="UP000000265">
    <property type="component" value="Chromosome"/>
</dbReference>
<dbReference type="GO" id="GO:0005829">
    <property type="term" value="C:cytosol"/>
    <property type="evidence" value="ECO:0007669"/>
    <property type="project" value="TreeGrafter"/>
</dbReference>
<dbReference type="GO" id="GO:0005524">
    <property type="term" value="F:ATP binding"/>
    <property type="evidence" value="ECO:0007669"/>
    <property type="project" value="UniProtKB-UniRule"/>
</dbReference>
<dbReference type="GO" id="GO:0003921">
    <property type="term" value="F:GMP synthase activity"/>
    <property type="evidence" value="ECO:0007669"/>
    <property type="project" value="InterPro"/>
</dbReference>
<dbReference type="CDD" id="cd01742">
    <property type="entry name" value="GATase1_GMP_Synthase"/>
    <property type="match status" value="1"/>
</dbReference>
<dbReference type="CDD" id="cd01997">
    <property type="entry name" value="GMP_synthase_C"/>
    <property type="match status" value="1"/>
</dbReference>
<dbReference type="FunFam" id="3.30.300.10:FF:000002">
    <property type="entry name" value="GMP synthase [glutamine-hydrolyzing]"/>
    <property type="match status" value="1"/>
</dbReference>
<dbReference type="FunFam" id="3.40.50.620:FF:000001">
    <property type="entry name" value="GMP synthase [glutamine-hydrolyzing]"/>
    <property type="match status" value="1"/>
</dbReference>
<dbReference type="FunFam" id="3.40.50.880:FF:000001">
    <property type="entry name" value="GMP synthase [glutamine-hydrolyzing]"/>
    <property type="match status" value="1"/>
</dbReference>
<dbReference type="Gene3D" id="3.30.300.10">
    <property type="match status" value="1"/>
</dbReference>
<dbReference type="Gene3D" id="3.40.50.880">
    <property type="match status" value="1"/>
</dbReference>
<dbReference type="Gene3D" id="3.40.50.620">
    <property type="entry name" value="HUPs"/>
    <property type="match status" value="1"/>
</dbReference>
<dbReference type="HAMAP" id="MF_00344">
    <property type="entry name" value="GMP_synthase"/>
    <property type="match status" value="1"/>
</dbReference>
<dbReference type="InterPro" id="IPR029062">
    <property type="entry name" value="Class_I_gatase-like"/>
</dbReference>
<dbReference type="InterPro" id="IPR017926">
    <property type="entry name" value="GATASE"/>
</dbReference>
<dbReference type="InterPro" id="IPR001674">
    <property type="entry name" value="GMP_synth_C"/>
</dbReference>
<dbReference type="InterPro" id="IPR004739">
    <property type="entry name" value="GMP_synth_GATase"/>
</dbReference>
<dbReference type="InterPro" id="IPR022955">
    <property type="entry name" value="GMP_synthase"/>
</dbReference>
<dbReference type="InterPro" id="IPR025777">
    <property type="entry name" value="GMPS_ATP_PPase_dom"/>
</dbReference>
<dbReference type="InterPro" id="IPR022310">
    <property type="entry name" value="NAD/GMP_synthase"/>
</dbReference>
<dbReference type="InterPro" id="IPR014729">
    <property type="entry name" value="Rossmann-like_a/b/a_fold"/>
</dbReference>
<dbReference type="NCBIfam" id="TIGR00884">
    <property type="entry name" value="guaA_Cterm"/>
    <property type="match status" value="1"/>
</dbReference>
<dbReference type="NCBIfam" id="TIGR00888">
    <property type="entry name" value="guaA_Nterm"/>
    <property type="match status" value="1"/>
</dbReference>
<dbReference type="NCBIfam" id="NF000848">
    <property type="entry name" value="PRK00074.1"/>
    <property type="match status" value="1"/>
</dbReference>
<dbReference type="PANTHER" id="PTHR11922:SF2">
    <property type="entry name" value="GMP SYNTHASE [GLUTAMINE-HYDROLYZING]"/>
    <property type="match status" value="1"/>
</dbReference>
<dbReference type="PANTHER" id="PTHR11922">
    <property type="entry name" value="GMP SYNTHASE-RELATED"/>
    <property type="match status" value="1"/>
</dbReference>
<dbReference type="Pfam" id="PF00117">
    <property type="entry name" value="GATase"/>
    <property type="match status" value="1"/>
</dbReference>
<dbReference type="Pfam" id="PF00958">
    <property type="entry name" value="GMP_synt_C"/>
    <property type="match status" value="1"/>
</dbReference>
<dbReference type="Pfam" id="PF02540">
    <property type="entry name" value="NAD_synthase"/>
    <property type="match status" value="1"/>
</dbReference>
<dbReference type="PRINTS" id="PR00097">
    <property type="entry name" value="ANTSNTHASEII"/>
</dbReference>
<dbReference type="PRINTS" id="PR00099">
    <property type="entry name" value="CPSGATASE"/>
</dbReference>
<dbReference type="PRINTS" id="PR00096">
    <property type="entry name" value="GATASE"/>
</dbReference>
<dbReference type="SUPFAM" id="SSF52402">
    <property type="entry name" value="Adenine nucleotide alpha hydrolases-like"/>
    <property type="match status" value="1"/>
</dbReference>
<dbReference type="SUPFAM" id="SSF52317">
    <property type="entry name" value="Class I glutamine amidotransferase-like"/>
    <property type="match status" value="1"/>
</dbReference>
<dbReference type="SUPFAM" id="SSF54810">
    <property type="entry name" value="GMP synthetase C-terminal dimerisation domain"/>
    <property type="match status" value="1"/>
</dbReference>
<dbReference type="PROSITE" id="PS51273">
    <property type="entry name" value="GATASE_TYPE_1"/>
    <property type="match status" value="1"/>
</dbReference>
<dbReference type="PROSITE" id="PS51553">
    <property type="entry name" value="GMPS_ATP_PPASE"/>
    <property type="match status" value="1"/>
</dbReference>
<gene>
    <name evidence="1" type="primary">guaA</name>
    <name type="ordered locus">KPN78578_27820</name>
    <name type="ORF">KPN_02833</name>
</gene>
<organism>
    <name type="scientific">Klebsiella pneumoniae subsp. pneumoniae (strain ATCC 700721 / MGH 78578)</name>
    <dbReference type="NCBI Taxonomy" id="272620"/>
    <lineage>
        <taxon>Bacteria</taxon>
        <taxon>Pseudomonadati</taxon>
        <taxon>Pseudomonadota</taxon>
        <taxon>Gammaproteobacteria</taxon>
        <taxon>Enterobacterales</taxon>
        <taxon>Enterobacteriaceae</taxon>
        <taxon>Klebsiella/Raoultella group</taxon>
        <taxon>Klebsiella</taxon>
        <taxon>Klebsiella pneumoniae complex</taxon>
    </lineage>
</organism>
<reference key="1">
    <citation type="submission" date="2006-09" db="EMBL/GenBank/DDBJ databases">
        <authorList>
            <consortium name="The Klebsiella pneumonia Genome Sequencing Project"/>
            <person name="McClelland M."/>
            <person name="Sanderson E.K."/>
            <person name="Spieth J."/>
            <person name="Clifton W.S."/>
            <person name="Latreille P."/>
            <person name="Sabo A."/>
            <person name="Pepin K."/>
            <person name="Bhonagiri V."/>
            <person name="Porwollik S."/>
            <person name="Ali J."/>
            <person name="Wilson R.K."/>
        </authorList>
    </citation>
    <scope>NUCLEOTIDE SEQUENCE [LARGE SCALE GENOMIC DNA]</scope>
    <source>
        <strain>ATCC 700721 / MGH 78578</strain>
    </source>
</reference>